<proteinExistence type="inferred from homology"/>
<name>WAPA_OXYSC</name>
<feature type="signal peptide" evidence="2">
    <location>
        <begin position="1"/>
        <end position="24"/>
    </location>
</feature>
<feature type="chain" id="PRO_5000395568" description="Scuwaprin-a">
    <location>
        <begin position="25"/>
        <end position="75"/>
    </location>
</feature>
<feature type="domain" description="WAP" evidence="3">
    <location>
        <begin position="27"/>
        <end position="72"/>
    </location>
</feature>
<feature type="disulfide bond" evidence="3">
    <location>
        <begin position="34"/>
        <end position="60"/>
    </location>
</feature>
<feature type="disulfide bond" evidence="3">
    <location>
        <begin position="43"/>
        <end position="64"/>
    </location>
</feature>
<feature type="disulfide bond" evidence="3">
    <location>
        <begin position="47"/>
        <end position="59"/>
    </location>
</feature>
<feature type="disulfide bond" evidence="3">
    <location>
        <begin position="53"/>
        <end position="68"/>
    </location>
</feature>
<evidence type="ECO:0000250" key="1">
    <source>
        <dbReference type="UniProtKB" id="P83952"/>
    </source>
</evidence>
<evidence type="ECO:0000255" key="2"/>
<evidence type="ECO:0000255" key="3">
    <source>
        <dbReference type="PROSITE-ProRule" id="PRU00722"/>
    </source>
</evidence>
<evidence type="ECO:0000303" key="4">
    <source>
    </source>
</evidence>
<evidence type="ECO:0000305" key="5"/>
<evidence type="ECO:0000305" key="6">
    <source>
    </source>
</evidence>
<reference key="1">
    <citation type="journal article" date="2008" name="Cell. Mol. Life Sci.">
        <title>Common evolution of waprin and Kunitz-like toxin families in Australian venomous snakes.</title>
        <authorList>
            <person name="St Pierre L."/>
            <person name="Earl S.T."/>
            <person name="Filippovich I."/>
            <person name="Sorokina N."/>
            <person name="Masci P.P."/>
            <person name="De Jersey J."/>
            <person name="Lavin M.F."/>
        </authorList>
    </citation>
    <scope>NUCLEOTIDE SEQUENCE [GENOMIC DNA / MRNA]</scope>
    <source>
        <tissue>Venom gland</tissue>
    </source>
</reference>
<protein>
    <recommendedName>
        <fullName evidence="4">Scuwaprin-a</fullName>
    </recommendedName>
</protein>
<accession>B5G6G8</accession>
<dbReference type="EMBL" id="DQ917553">
    <property type="protein sequence ID" value="ABK63582.1"/>
    <property type="molecule type" value="mRNA"/>
</dbReference>
<dbReference type="EMBL" id="EU401818">
    <property type="protein sequence ID" value="ACC77767.1"/>
    <property type="molecule type" value="Genomic_DNA"/>
</dbReference>
<dbReference type="SMR" id="B5G6G8"/>
<dbReference type="GO" id="GO:0005576">
    <property type="term" value="C:extracellular region"/>
    <property type="evidence" value="ECO:0000250"/>
    <property type="project" value="UniProtKB"/>
</dbReference>
<dbReference type="GO" id="GO:0005615">
    <property type="term" value="C:extracellular space"/>
    <property type="evidence" value="ECO:0007669"/>
    <property type="project" value="TreeGrafter"/>
</dbReference>
<dbReference type="GO" id="GO:0004867">
    <property type="term" value="F:serine-type endopeptidase inhibitor activity"/>
    <property type="evidence" value="ECO:0007669"/>
    <property type="project" value="TreeGrafter"/>
</dbReference>
<dbReference type="GO" id="GO:0019731">
    <property type="term" value="P:antibacterial humoral response"/>
    <property type="evidence" value="ECO:0007669"/>
    <property type="project" value="TreeGrafter"/>
</dbReference>
<dbReference type="GO" id="GO:0045087">
    <property type="term" value="P:innate immune response"/>
    <property type="evidence" value="ECO:0007669"/>
    <property type="project" value="TreeGrafter"/>
</dbReference>
<dbReference type="GO" id="GO:0044278">
    <property type="term" value="P:venom-mediated disruption of cell wall in another organism"/>
    <property type="evidence" value="ECO:0000250"/>
    <property type="project" value="UniProtKB"/>
</dbReference>
<dbReference type="Gene3D" id="4.10.75.10">
    <property type="entry name" value="Elafin-like"/>
    <property type="match status" value="1"/>
</dbReference>
<dbReference type="InterPro" id="IPR036645">
    <property type="entry name" value="Elafin-like_sf"/>
</dbReference>
<dbReference type="InterPro" id="IPR008197">
    <property type="entry name" value="WAP_dom"/>
</dbReference>
<dbReference type="InterPro" id="IPR050514">
    <property type="entry name" value="WAP_four-disulfide_core"/>
</dbReference>
<dbReference type="PANTHER" id="PTHR19441:SF44">
    <property type="entry name" value="ANTILEUKOPROTEINASE"/>
    <property type="match status" value="1"/>
</dbReference>
<dbReference type="PANTHER" id="PTHR19441">
    <property type="entry name" value="WHEY ACDIC PROTEIN WAP"/>
    <property type="match status" value="1"/>
</dbReference>
<dbReference type="Pfam" id="PF00095">
    <property type="entry name" value="WAP"/>
    <property type="match status" value="1"/>
</dbReference>
<dbReference type="PRINTS" id="PR00003">
    <property type="entry name" value="4DISULPHCORE"/>
</dbReference>
<dbReference type="SMART" id="SM00217">
    <property type="entry name" value="WAP"/>
    <property type="match status" value="1"/>
</dbReference>
<dbReference type="SUPFAM" id="SSF57256">
    <property type="entry name" value="Elafin-like"/>
    <property type="match status" value="1"/>
</dbReference>
<dbReference type="PROSITE" id="PS51390">
    <property type="entry name" value="WAP"/>
    <property type="match status" value="1"/>
</dbReference>
<sequence length="75" mass="8218">MSSGGLLLLLGLLTLWAELTPVSGQDRPKKPGLCPPRPQKPPCVKECKNDWSCPGQQKCCSYGCIDECRDPIFVN</sequence>
<organism>
    <name type="scientific">Oxyuranus scutellatus scutellatus</name>
    <name type="common">Australian taipan</name>
    <name type="synonym">Coastal taipan</name>
    <dbReference type="NCBI Taxonomy" id="8667"/>
    <lineage>
        <taxon>Eukaryota</taxon>
        <taxon>Metazoa</taxon>
        <taxon>Chordata</taxon>
        <taxon>Craniata</taxon>
        <taxon>Vertebrata</taxon>
        <taxon>Euteleostomi</taxon>
        <taxon>Lepidosauria</taxon>
        <taxon>Squamata</taxon>
        <taxon>Bifurcata</taxon>
        <taxon>Unidentata</taxon>
        <taxon>Episquamata</taxon>
        <taxon>Toxicofera</taxon>
        <taxon>Serpentes</taxon>
        <taxon>Colubroidea</taxon>
        <taxon>Elapidae</taxon>
        <taxon>Hydrophiinae</taxon>
        <taxon>Oxyuranus</taxon>
    </lineage>
</organism>
<keyword id="KW-0044">Antibiotic</keyword>
<keyword id="KW-0929">Antimicrobial</keyword>
<keyword id="KW-1015">Disulfide bond</keyword>
<keyword id="KW-0964">Secreted</keyword>
<keyword id="KW-0732">Signal</keyword>
<comment type="function">
    <text evidence="1">Damages membranes of susceptible bacteria. Has no hemolytic activity. Not toxic to mice. Does not inhibit the proteinases elastase and cathepsin G.</text>
</comment>
<comment type="subcellular location">
    <subcellularLocation>
        <location evidence="6">Secreted</location>
    </subcellularLocation>
</comment>
<comment type="tissue specificity">
    <text evidence="6">Expressed by the venom gland.</text>
</comment>
<comment type="similarity">
    <text evidence="5">Belongs to the venom waprin family.</text>
</comment>